<organism>
    <name type="scientific">Escherichia coli (strain SE11)</name>
    <dbReference type="NCBI Taxonomy" id="409438"/>
    <lineage>
        <taxon>Bacteria</taxon>
        <taxon>Pseudomonadati</taxon>
        <taxon>Pseudomonadota</taxon>
        <taxon>Gammaproteobacteria</taxon>
        <taxon>Enterobacterales</taxon>
        <taxon>Enterobacteriaceae</taxon>
        <taxon>Escherichia</taxon>
    </lineage>
</organism>
<protein>
    <recommendedName>
        <fullName evidence="1">Phosphoenolpyruvate carboxylase</fullName>
        <shortName evidence="1">PEPC</shortName>
        <shortName evidence="1">PEPCase</shortName>
        <ecNumber evidence="1">4.1.1.31</ecNumber>
    </recommendedName>
</protein>
<gene>
    <name evidence="1" type="primary">ppc</name>
    <name type="ordered locus">ECSE_4249</name>
</gene>
<proteinExistence type="inferred from homology"/>
<reference key="1">
    <citation type="journal article" date="2008" name="DNA Res.">
        <title>Complete genome sequence and comparative analysis of the wild-type commensal Escherichia coli strain SE11 isolated from a healthy adult.</title>
        <authorList>
            <person name="Oshima K."/>
            <person name="Toh H."/>
            <person name="Ogura Y."/>
            <person name="Sasamoto H."/>
            <person name="Morita H."/>
            <person name="Park S.-H."/>
            <person name="Ooka T."/>
            <person name="Iyoda S."/>
            <person name="Taylor T.D."/>
            <person name="Hayashi T."/>
            <person name="Itoh K."/>
            <person name="Hattori M."/>
        </authorList>
    </citation>
    <scope>NUCLEOTIDE SEQUENCE [LARGE SCALE GENOMIC DNA]</scope>
    <source>
        <strain>SE11</strain>
    </source>
</reference>
<accession>B6I5H2</accession>
<comment type="function">
    <text evidence="1">Forms oxaloacetate, a four-carbon dicarboxylic acid source for the tricarboxylic acid cycle.</text>
</comment>
<comment type="catalytic activity">
    <reaction evidence="1">
        <text>oxaloacetate + phosphate = phosphoenolpyruvate + hydrogencarbonate</text>
        <dbReference type="Rhea" id="RHEA:28370"/>
        <dbReference type="ChEBI" id="CHEBI:16452"/>
        <dbReference type="ChEBI" id="CHEBI:17544"/>
        <dbReference type="ChEBI" id="CHEBI:43474"/>
        <dbReference type="ChEBI" id="CHEBI:58702"/>
        <dbReference type="EC" id="4.1.1.31"/>
    </reaction>
</comment>
<comment type="cofactor">
    <cofactor evidence="1">
        <name>Mg(2+)</name>
        <dbReference type="ChEBI" id="CHEBI:18420"/>
    </cofactor>
</comment>
<comment type="similarity">
    <text evidence="1">Belongs to the PEPCase type 1 family.</text>
</comment>
<keyword id="KW-0120">Carbon dioxide fixation</keyword>
<keyword id="KW-0456">Lyase</keyword>
<keyword id="KW-0460">Magnesium</keyword>
<feature type="chain" id="PRO_1000129831" description="Phosphoenolpyruvate carboxylase">
    <location>
        <begin position="1"/>
        <end position="883"/>
    </location>
</feature>
<feature type="active site" evidence="1">
    <location>
        <position position="138"/>
    </location>
</feature>
<feature type="active site" evidence="1">
    <location>
        <position position="546"/>
    </location>
</feature>
<evidence type="ECO:0000255" key="1">
    <source>
        <dbReference type="HAMAP-Rule" id="MF_00595"/>
    </source>
</evidence>
<sequence length="883" mass="99077">MNEQYSALRSNVSMLGKVLGETIKDALGEHILERVETIRKLSKSSRAGNDANRQELLTTLQNLSNDELLPVARAFSQFLNLANTAEQYHSISPKGEAASNPEVIARTLRKLKNQPELSEDTIKKAVESLSLELVLTAHPTEITRRTLIHKMVEVNACLKQLDNKDIADYEHNQLMRRLRQLIAQSWHTDEIRKLRPSPVDEAKWGFAVVENSLWQGVPNYLRELNEQLEENLGYKLPVEFVPVRFTSWMGGDRDGNPNVTADITRHVLLLSRWKATDLFLKDIQVLVSELSMVEATPELLALVGEEGAAEPYRYLMKNLRSRLMATQAWLEARLKGEELPKPEGLLTQNEELWEPLYACYQSLQACGMGIIANGDLLDTLRRVKCFGVPLVRIDIRQESTRHTEALGELTRYLGIGDYESWSEADKQAFLIRELNSKRPLLPRNWQPSAETREVLDTCQVIAEAPQGSIAAYVISMAKTPSDVLAVHLLLKEAGIGFAMPVAPLFETLDDLNNANDVMTQLLNIDWYRGLIQGKQMVMIGYSDSAKDAGVMAASWAQYQAQDALIKTCEKAGIELTLFHGRGGSIGRGGAPAHAALLSQPPGSLKGGLRVTEQGEMIRFKYGLPEITVSSLSLYTGAILEANLLPPPEPKESWRRIMDELSVISCDLYRGYVRENKDFVPYFRSATPEQELGKLPLGSRPAKRRPTGGVESLRAIPWIFAWTQNRLMLPAWLGAGTALQKVVEDGKQSELEAMCRDWPFFSTRLGMLEMVFAKADLWLAEYYDQRLVDKALWPLGKELRNLQEEDIKVVLAIANDSHLMADLPWIAESIQLRNIYTDPLNVLQAELLHRSRQAEKEGQEPDPRVEQALMVTIAGIAAGMRNTG</sequence>
<dbReference type="EC" id="4.1.1.31" evidence="1"/>
<dbReference type="EMBL" id="AP009240">
    <property type="protein sequence ID" value="BAG79773.1"/>
    <property type="molecule type" value="Genomic_DNA"/>
</dbReference>
<dbReference type="RefSeq" id="WP_001005579.1">
    <property type="nucleotide sequence ID" value="NC_011415.1"/>
</dbReference>
<dbReference type="SMR" id="B6I5H2"/>
<dbReference type="GeneID" id="93777937"/>
<dbReference type="KEGG" id="ecy:ECSE_4249"/>
<dbReference type="HOGENOM" id="CLU_006557_2_0_6"/>
<dbReference type="Proteomes" id="UP000008199">
    <property type="component" value="Chromosome"/>
</dbReference>
<dbReference type="GO" id="GO:0005829">
    <property type="term" value="C:cytosol"/>
    <property type="evidence" value="ECO:0007669"/>
    <property type="project" value="TreeGrafter"/>
</dbReference>
<dbReference type="GO" id="GO:0000287">
    <property type="term" value="F:magnesium ion binding"/>
    <property type="evidence" value="ECO:0007669"/>
    <property type="project" value="UniProtKB-UniRule"/>
</dbReference>
<dbReference type="GO" id="GO:0008964">
    <property type="term" value="F:phosphoenolpyruvate carboxylase activity"/>
    <property type="evidence" value="ECO:0007669"/>
    <property type="project" value="UniProtKB-UniRule"/>
</dbReference>
<dbReference type="GO" id="GO:0015977">
    <property type="term" value="P:carbon fixation"/>
    <property type="evidence" value="ECO:0007669"/>
    <property type="project" value="UniProtKB-UniRule"/>
</dbReference>
<dbReference type="GO" id="GO:0006107">
    <property type="term" value="P:oxaloacetate metabolic process"/>
    <property type="evidence" value="ECO:0007669"/>
    <property type="project" value="UniProtKB-UniRule"/>
</dbReference>
<dbReference type="GO" id="GO:0006099">
    <property type="term" value="P:tricarboxylic acid cycle"/>
    <property type="evidence" value="ECO:0007669"/>
    <property type="project" value="InterPro"/>
</dbReference>
<dbReference type="FunFam" id="1.20.1440.90:FF:000002">
    <property type="entry name" value="Phosphoenolpyruvate carboxylase"/>
    <property type="match status" value="1"/>
</dbReference>
<dbReference type="Gene3D" id="1.20.1440.90">
    <property type="entry name" value="Phosphoenolpyruvate/pyruvate domain"/>
    <property type="match status" value="1"/>
</dbReference>
<dbReference type="HAMAP" id="MF_00595">
    <property type="entry name" value="PEPcase_type1"/>
    <property type="match status" value="1"/>
</dbReference>
<dbReference type="InterPro" id="IPR021135">
    <property type="entry name" value="PEP_COase"/>
</dbReference>
<dbReference type="InterPro" id="IPR022805">
    <property type="entry name" value="PEP_COase_bac/pln-type"/>
</dbReference>
<dbReference type="InterPro" id="IPR018129">
    <property type="entry name" value="PEP_COase_Lys_AS"/>
</dbReference>
<dbReference type="InterPro" id="IPR033129">
    <property type="entry name" value="PEPCASE_His_AS"/>
</dbReference>
<dbReference type="InterPro" id="IPR015813">
    <property type="entry name" value="Pyrv/PenolPyrv_kinase-like_dom"/>
</dbReference>
<dbReference type="NCBIfam" id="NF000584">
    <property type="entry name" value="PRK00009.1"/>
    <property type="match status" value="1"/>
</dbReference>
<dbReference type="PANTHER" id="PTHR30523">
    <property type="entry name" value="PHOSPHOENOLPYRUVATE CARBOXYLASE"/>
    <property type="match status" value="1"/>
</dbReference>
<dbReference type="PANTHER" id="PTHR30523:SF6">
    <property type="entry name" value="PHOSPHOENOLPYRUVATE CARBOXYLASE"/>
    <property type="match status" value="1"/>
</dbReference>
<dbReference type="Pfam" id="PF00311">
    <property type="entry name" value="PEPcase"/>
    <property type="match status" value="1"/>
</dbReference>
<dbReference type="PRINTS" id="PR00150">
    <property type="entry name" value="PEPCARBXLASE"/>
</dbReference>
<dbReference type="SUPFAM" id="SSF51621">
    <property type="entry name" value="Phosphoenolpyruvate/pyruvate domain"/>
    <property type="match status" value="1"/>
</dbReference>
<dbReference type="PROSITE" id="PS00781">
    <property type="entry name" value="PEPCASE_1"/>
    <property type="match status" value="1"/>
</dbReference>
<dbReference type="PROSITE" id="PS00393">
    <property type="entry name" value="PEPCASE_2"/>
    <property type="match status" value="1"/>
</dbReference>
<name>CAPP_ECOSE</name>